<reference key="1">
    <citation type="journal article" date="2003" name="Nature">
        <title>The DNA sequence of human chromosome 7.</title>
        <authorList>
            <person name="Hillier L.W."/>
            <person name="Fulton R.S."/>
            <person name="Fulton L.A."/>
            <person name="Graves T.A."/>
            <person name="Pepin K.H."/>
            <person name="Wagner-McPherson C."/>
            <person name="Layman D."/>
            <person name="Maas J."/>
            <person name="Jaeger S."/>
            <person name="Walker R."/>
            <person name="Wylie K."/>
            <person name="Sekhon M."/>
            <person name="Becker M.C."/>
            <person name="O'Laughlin M.D."/>
            <person name="Schaller M.E."/>
            <person name="Fewell G.A."/>
            <person name="Delehaunty K.D."/>
            <person name="Miner T.L."/>
            <person name="Nash W.E."/>
            <person name="Cordes M."/>
            <person name="Du H."/>
            <person name="Sun H."/>
            <person name="Edwards J."/>
            <person name="Bradshaw-Cordum H."/>
            <person name="Ali J."/>
            <person name="Andrews S."/>
            <person name="Isak A."/>
            <person name="Vanbrunt A."/>
            <person name="Nguyen C."/>
            <person name="Du F."/>
            <person name="Lamar B."/>
            <person name="Courtney L."/>
            <person name="Kalicki J."/>
            <person name="Ozersky P."/>
            <person name="Bielicki L."/>
            <person name="Scott K."/>
            <person name="Holmes A."/>
            <person name="Harkins R."/>
            <person name="Harris A."/>
            <person name="Strong C.M."/>
            <person name="Hou S."/>
            <person name="Tomlinson C."/>
            <person name="Dauphin-Kohlberg S."/>
            <person name="Kozlowicz-Reilly A."/>
            <person name="Leonard S."/>
            <person name="Rohlfing T."/>
            <person name="Rock S.M."/>
            <person name="Tin-Wollam A.-M."/>
            <person name="Abbott A."/>
            <person name="Minx P."/>
            <person name="Maupin R."/>
            <person name="Strowmatt C."/>
            <person name="Latreille P."/>
            <person name="Miller N."/>
            <person name="Johnson D."/>
            <person name="Murray J."/>
            <person name="Woessner J.P."/>
            <person name="Wendl M.C."/>
            <person name="Yang S.-P."/>
            <person name="Schultz B.R."/>
            <person name="Wallis J.W."/>
            <person name="Spieth J."/>
            <person name="Bieri T.A."/>
            <person name="Nelson J.O."/>
            <person name="Berkowicz N."/>
            <person name="Wohldmann P.E."/>
            <person name="Cook L.L."/>
            <person name="Hickenbotham M.T."/>
            <person name="Eldred J."/>
            <person name="Williams D."/>
            <person name="Bedell J.A."/>
            <person name="Mardis E.R."/>
            <person name="Clifton S.W."/>
            <person name="Chissoe S.L."/>
            <person name="Marra M.A."/>
            <person name="Raymond C."/>
            <person name="Haugen E."/>
            <person name="Gillett W."/>
            <person name="Zhou Y."/>
            <person name="James R."/>
            <person name="Phelps K."/>
            <person name="Iadanoto S."/>
            <person name="Bubb K."/>
            <person name="Simms E."/>
            <person name="Levy R."/>
            <person name="Clendenning J."/>
            <person name="Kaul R."/>
            <person name="Kent W.J."/>
            <person name="Furey T.S."/>
            <person name="Baertsch R.A."/>
            <person name="Brent M.R."/>
            <person name="Keibler E."/>
            <person name="Flicek P."/>
            <person name="Bork P."/>
            <person name="Suyama M."/>
            <person name="Bailey J.A."/>
            <person name="Portnoy M.E."/>
            <person name="Torrents D."/>
            <person name="Chinwalla A.T."/>
            <person name="Gish W.R."/>
            <person name="Eddy S.R."/>
            <person name="McPherson J.D."/>
            <person name="Olson M.V."/>
            <person name="Eichler E.E."/>
            <person name="Green E.D."/>
            <person name="Waterston R.H."/>
            <person name="Wilson R.K."/>
        </authorList>
    </citation>
    <scope>NUCLEOTIDE SEQUENCE [LARGE SCALE GENOMIC DNA]</scope>
</reference>
<protein>
    <recommendedName>
        <fullName>Putative speedy protein-like protein 3</fullName>
    </recommendedName>
</protein>
<feature type="chain" id="PRO_0000341230" description="Putative speedy protein-like protein 3">
    <location>
        <begin position="1"/>
        <end position="290"/>
    </location>
</feature>
<feature type="region of interest" description="Disordered" evidence="1">
    <location>
        <begin position="16"/>
        <end position="50"/>
    </location>
</feature>
<feature type="compositionally biased region" description="Acidic residues" evidence="1">
    <location>
        <begin position="36"/>
        <end position="50"/>
    </location>
</feature>
<name>SPDL3_HUMAN</name>
<organism>
    <name type="scientific">Homo sapiens</name>
    <name type="common">Human</name>
    <dbReference type="NCBI Taxonomy" id="9606"/>
    <lineage>
        <taxon>Eukaryota</taxon>
        <taxon>Metazoa</taxon>
        <taxon>Chordata</taxon>
        <taxon>Craniata</taxon>
        <taxon>Vertebrata</taxon>
        <taxon>Euteleostomi</taxon>
        <taxon>Mammalia</taxon>
        <taxon>Eutheria</taxon>
        <taxon>Euarchontoglires</taxon>
        <taxon>Primates</taxon>
        <taxon>Haplorrhini</taxon>
        <taxon>Catarrhini</taxon>
        <taxon>Hominidae</taxon>
        <taxon>Homo</taxon>
    </lineage>
</organism>
<keyword id="KW-1185">Reference proteome</keyword>
<dbReference type="EMBL" id="AC007000">
    <property type="status" value="NOT_ANNOTATED_CDS"/>
    <property type="molecule type" value="Genomic_DNA"/>
</dbReference>
<dbReference type="SMR" id="A6NJR5"/>
<dbReference type="BioMuta" id="-"/>
<dbReference type="MassIVE" id="A6NJR5"/>
<dbReference type="PeptideAtlas" id="A6NJR5"/>
<dbReference type="AGR" id="HGNC:16408"/>
<dbReference type="AGR" id="HGNC:51512"/>
<dbReference type="neXtProt" id="NX_A6NJR5"/>
<dbReference type="InParanoid" id="A6NJR5"/>
<dbReference type="PAN-GO" id="A6NJR5">
    <property type="GO annotations" value="1 GO annotation based on evolutionary models"/>
</dbReference>
<dbReference type="PhylomeDB" id="A6NJR5"/>
<dbReference type="Pharos" id="A6NJR5">
    <property type="development level" value="Tdark"/>
</dbReference>
<dbReference type="Proteomes" id="UP000005640">
    <property type="component" value="Unplaced"/>
</dbReference>
<dbReference type="RNAct" id="A6NJR5">
    <property type="molecule type" value="protein"/>
</dbReference>
<dbReference type="GO" id="GO:0019901">
    <property type="term" value="F:protein kinase binding"/>
    <property type="evidence" value="ECO:0000318"/>
    <property type="project" value="GO_Central"/>
</dbReference>
<dbReference type="InterPro" id="IPR020984">
    <property type="entry name" value="Speedy"/>
</dbReference>
<dbReference type="PANTHER" id="PTHR31156">
    <property type="entry name" value="WBSCR19-LIKE PROTEIN"/>
    <property type="match status" value="1"/>
</dbReference>
<dbReference type="Pfam" id="PF11357">
    <property type="entry name" value="Spy1"/>
    <property type="match status" value="1"/>
</dbReference>
<sequence>MQKHYTVAWFLYSAPGVDPSPPCRSLGWKRKKEWSDESEEEPEKELAPEPEETWVVEMLCGLKMKLKQQRVSPILPEHHKDFNSQLAPGVDPSPPHRSFCWKRKREWWDESEESLEEEPRKVLAPEPEEIWVAEMLCGLKMKLKRRRVSLVLPEHHEAFNRLLEDPVIKRFLAWDKDLRVSDKYLLAMVIAYFSRAGLPSWQYQRIHFFLALYLANDMEEDDEDPKQNIFYFLYGKTRSRIPLIALFQKLRFQFFCSMSGRAWVSREELEEIQAYDPEHWVWARDRARLS</sequence>
<comment type="similarity">
    <text evidence="2">Belongs to the Speedy/Ringo family.</text>
</comment>
<comment type="caution">
    <text evidence="2">Could be the product of a pseudogene.</text>
</comment>
<evidence type="ECO:0000256" key="1">
    <source>
        <dbReference type="SAM" id="MobiDB-lite"/>
    </source>
</evidence>
<evidence type="ECO:0000305" key="2"/>
<proteinExistence type="uncertain"/>
<accession>A6NJR5</accession>